<organism>
    <name type="scientific">Escherichia coli (strain K12)</name>
    <dbReference type="NCBI Taxonomy" id="83333"/>
    <lineage>
        <taxon>Bacteria</taxon>
        <taxon>Pseudomonadati</taxon>
        <taxon>Pseudomonadota</taxon>
        <taxon>Gammaproteobacteria</taxon>
        <taxon>Enterobacterales</taxon>
        <taxon>Enterobacteriaceae</taxon>
        <taxon>Escherichia</taxon>
    </lineage>
</organism>
<reference key="1">
    <citation type="journal article" date="1994" name="Nucleic Acids Res.">
        <title>Systematic sequencing of the Escherichia coli genome: analysis of the 2.4-4.1 min (110,917-193,643 bp) region.</title>
        <authorList>
            <person name="Fujita N."/>
            <person name="Mori H."/>
            <person name="Yura T."/>
            <person name="Ishihama A."/>
        </authorList>
    </citation>
    <scope>NUCLEOTIDE SEQUENCE [LARGE SCALE GENOMIC DNA]</scope>
    <source>
        <strain>K12 / W3110 / ATCC 27325 / DSM 5911</strain>
    </source>
</reference>
<reference key="2">
    <citation type="journal article" date="1997" name="Science">
        <title>The complete genome sequence of Escherichia coli K-12.</title>
        <authorList>
            <person name="Blattner F.R."/>
            <person name="Plunkett G. III"/>
            <person name="Bloch C.A."/>
            <person name="Perna N.T."/>
            <person name="Burland V."/>
            <person name="Riley M."/>
            <person name="Collado-Vides J."/>
            <person name="Glasner J.D."/>
            <person name="Rode C.K."/>
            <person name="Mayhew G.F."/>
            <person name="Gregor J."/>
            <person name="Davis N.W."/>
            <person name="Kirkpatrick H.A."/>
            <person name="Goeden M.A."/>
            <person name="Rose D.J."/>
            <person name="Mau B."/>
            <person name="Shao Y."/>
        </authorList>
    </citation>
    <scope>NUCLEOTIDE SEQUENCE [LARGE SCALE GENOMIC DNA]</scope>
    <source>
        <strain>K12 / MG1655 / ATCC 47076</strain>
    </source>
</reference>
<reference key="3">
    <citation type="journal article" date="2006" name="Mol. Syst. Biol.">
        <title>Highly accurate genome sequences of Escherichia coli K-12 strains MG1655 and W3110.</title>
        <authorList>
            <person name="Hayashi K."/>
            <person name="Morooka N."/>
            <person name="Yamamoto Y."/>
            <person name="Fujita K."/>
            <person name="Isono K."/>
            <person name="Choi S."/>
            <person name="Ohtsubo E."/>
            <person name="Baba T."/>
            <person name="Wanner B.L."/>
            <person name="Mori H."/>
            <person name="Horiuchi T."/>
        </authorList>
    </citation>
    <scope>NUCLEOTIDE SEQUENCE [LARGE SCALE GENOMIC DNA]</scope>
    <scope>SEQUENCE REVISION TO 251-308</scope>
    <source>
        <strain>K12 / W3110 / ATCC 27325 / DSM 5911</strain>
    </source>
</reference>
<reference key="4">
    <citation type="submission" date="1992-03" db="EMBL/GenBank/DDBJ databases">
        <authorList>
            <person name="Masters M."/>
        </authorList>
    </citation>
    <scope>NUCLEOTIDE SEQUENCE [GENOMIC DNA] OF 46-245</scope>
    <source>
        <strain>K12</strain>
    </source>
</reference>
<reference key="5">
    <citation type="journal article" date="1990" name="J. Bacteriol.">
        <title>Identification and characterization of a new Escherichia coli gene that is a dosage-dependent suppressor of a dnaK deletion mutation.</title>
        <authorList>
            <person name="Kang P.J."/>
            <person name="Craig E.A."/>
        </authorList>
    </citation>
    <scope>PRELIMINARY NUCLEOTIDE SEQUENCE [GENOMIC DNA] OF 1-45</scope>
</reference>
<reference key="6">
    <citation type="journal article" date="2004" name="Nucleic Acids Res.">
        <title>A minimalist glutamyl-tRNA synthetase dedicated to aminoacylation of the tRNAAsp QUC anticodon.</title>
        <authorList>
            <person name="Blaise M."/>
            <person name="Becker H.D."/>
            <person name="Keith G."/>
            <person name="Cambillau C."/>
            <person name="Lapointe J."/>
            <person name="Giege R."/>
            <person name="Kern D."/>
        </authorList>
    </citation>
    <scope>FUNCTION</scope>
</reference>
<reference key="7">
    <citation type="journal article" date="2004" name="Proc. Natl. Acad. Sci. U.S.A.">
        <title>An aminoacyl-tRNA synthetase-like protein encoded by the Escherichia coli yadB gene glutamylates specifically tRNAAsp.</title>
        <authorList>
            <person name="Dubois D.Y."/>
            <person name="Blaise M."/>
            <person name="Becker H.D."/>
            <person name="Campanacci V."/>
            <person name="Keith G."/>
            <person name="Giege R."/>
            <person name="Cambillau C."/>
            <person name="Lapointe J."/>
            <person name="Kern D."/>
        </authorList>
    </citation>
    <scope>FUNCTION</scope>
</reference>
<reference key="8">
    <citation type="journal article" date="2004" name="Proc. Natl. Acad. Sci. U.S.A.">
        <title>A truncated aminoacyl-tRNA synthetase modifies RNA.</title>
        <authorList>
            <person name="Salazar J.C."/>
            <person name="Ambrogelly A."/>
            <person name="Crain P.F."/>
            <person name="McCloskey J.A."/>
            <person name="Soell D."/>
        </authorList>
    </citation>
    <scope>FUNCTION</scope>
</reference>
<reference key="9">
    <citation type="journal article" date="2004" name="J. Mol. Biol.">
        <title>The Escherichia coli YadB gene product reveals a novel aminoacyl-tRNA synthetase like activity.</title>
        <authorList>
            <person name="Campanacci V."/>
            <person name="Dubois D.Y."/>
            <person name="Becker H.D."/>
            <person name="Kern D."/>
            <person name="Spinelli S."/>
            <person name="Valencia C."/>
            <person name="Pagot F."/>
            <person name="Salomoni A."/>
            <person name="Grisel S."/>
            <person name="Vincentelli R."/>
            <person name="Bignon C."/>
            <person name="Lapointe J."/>
            <person name="Giege R."/>
            <person name="Cambillau C."/>
        </authorList>
    </citation>
    <scope>X-RAY CRYSTALLOGRAPHY (1.5 ANGSTROMS) OF 10-308</scope>
    <scope>ZINC-BINDING SITE</scope>
</reference>
<reference key="10">
    <citation type="journal article" date="2008" name="J. Mol. Biol.">
        <title>Crystal structure of glutamyl-queuosine tRNAAsp synthetase complexed with L-glutamate: structural elements mediating tRNA-independent activation of glutamate and glutamylation of tRNAAsp anticodon.</title>
        <authorList>
            <person name="Blaise M."/>
            <person name="Olieric V."/>
            <person name="Sauter C."/>
            <person name="Lorber B."/>
            <person name="Roy B."/>
            <person name="Karmakar S."/>
            <person name="Banerjee R."/>
            <person name="Becker H.D."/>
            <person name="Kern D."/>
        </authorList>
    </citation>
    <scope>X-RAY CRYSTALLOGRAPHY (1.75 ANGSTROMS) OF 10-308 IN COMPLEX WITH GLUTAMATE AND ZINC IONS</scope>
</reference>
<accession>P27305</accession>
<accession>P75662</accession>
<proteinExistence type="evidence at protein level"/>
<gene>
    <name type="primary">gluQ</name>
    <name type="synonym">yadB</name>
    <name type="ordered locus">b0144</name>
    <name type="ordered locus">JW5892</name>
</gene>
<dbReference type="EC" id="6.1.1.-"/>
<dbReference type="EMBL" id="U00096">
    <property type="protein sequence ID" value="AAC73255.3"/>
    <property type="molecule type" value="Genomic_DNA"/>
</dbReference>
<dbReference type="EMBL" id="AP009048">
    <property type="protein sequence ID" value="BAB96721.2"/>
    <property type="molecule type" value="Genomic_DNA"/>
</dbReference>
<dbReference type="EMBL" id="X64595">
    <property type="status" value="NOT_ANNOTATED_CDS"/>
    <property type="molecule type" value="Genomic_DNA"/>
</dbReference>
<dbReference type="EMBL" id="M34945">
    <property type="protein sequence ID" value="AAA23686.1"/>
    <property type="status" value="ALT_SEQ"/>
    <property type="molecule type" value="Genomic_DNA"/>
</dbReference>
<dbReference type="PIR" id="H64737">
    <property type="entry name" value="H64737"/>
</dbReference>
<dbReference type="RefSeq" id="NP_414686.3">
    <property type="nucleotide sequence ID" value="NC_000913.3"/>
</dbReference>
<dbReference type="PDB" id="1NZJ">
    <property type="method" value="X-ray"/>
    <property type="resolution" value="1.50 A"/>
    <property type="chains" value="A=11-308"/>
</dbReference>
<dbReference type="PDB" id="4A91">
    <property type="method" value="X-ray"/>
    <property type="resolution" value="1.75 A"/>
    <property type="chains" value="A=11-308"/>
</dbReference>
<dbReference type="PDBsum" id="1NZJ"/>
<dbReference type="PDBsum" id="4A91"/>
<dbReference type="SMR" id="P27305"/>
<dbReference type="BioGRID" id="4259736">
    <property type="interactions" value="10"/>
</dbReference>
<dbReference type="DIP" id="DIP-11180N"/>
<dbReference type="FunCoup" id="P27305">
    <property type="interactions" value="52"/>
</dbReference>
<dbReference type="IntAct" id="P27305">
    <property type="interactions" value="6"/>
</dbReference>
<dbReference type="STRING" id="511145.b0144"/>
<dbReference type="jPOST" id="P27305"/>
<dbReference type="PaxDb" id="511145-b0144"/>
<dbReference type="EnsemblBacteria" id="AAC73255">
    <property type="protein sequence ID" value="AAC73255"/>
    <property type="gene ID" value="b0144"/>
</dbReference>
<dbReference type="GeneID" id="944846"/>
<dbReference type="KEGG" id="ecj:JW5892"/>
<dbReference type="KEGG" id="eco:b0144"/>
<dbReference type="PATRIC" id="fig|1411691.4.peg.2137"/>
<dbReference type="EchoBASE" id="EB1337"/>
<dbReference type="eggNOG" id="COG0008">
    <property type="taxonomic scope" value="Bacteria"/>
</dbReference>
<dbReference type="HOGENOM" id="CLU_015768_0_1_6"/>
<dbReference type="InParanoid" id="P27305"/>
<dbReference type="OMA" id="WLLRMED"/>
<dbReference type="OrthoDB" id="9807503at2"/>
<dbReference type="PhylomeDB" id="P27305"/>
<dbReference type="BioCyc" id="EcoCyc:EG11362-MONOMER"/>
<dbReference type="BioCyc" id="MetaCyc:EG11362-MONOMER"/>
<dbReference type="BRENDA" id="6.1.1.B3">
    <property type="organism ID" value="2026"/>
</dbReference>
<dbReference type="SABIO-RK" id="P27305"/>
<dbReference type="EvolutionaryTrace" id="P27305"/>
<dbReference type="PRO" id="PR:P27305"/>
<dbReference type="Proteomes" id="UP000000625">
    <property type="component" value="Chromosome"/>
</dbReference>
<dbReference type="GO" id="GO:0005829">
    <property type="term" value="C:cytosol"/>
    <property type="evidence" value="ECO:0000318"/>
    <property type="project" value="GO_Central"/>
</dbReference>
<dbReference type="GO" id="GO:0005524">
    <property type="term" value="F:ATP binding"/>
    <property type="evidence" value="ECO:0000314"/>
    <property type="project" value="EcoCyc"/>
</dbReference>
<dbReference type="GO" id="GO:0004818">
    <property type="term" value="F:glutamate-tRNA ligase activity"/>
    <property type="evidence" value="ECO:0000318"/>
    <property type="project" value="GO_Central"/>
</dbReference>
<dbReference type="GO" id="GO:0008270">
    <property type="term" value="F:zinc ion binding"/>
    <property type="evidence" value="ECO:0000314"/>
    <property type="project" value="EcoCyc"/>
</dbReference>
<dbReference type="GO" id="GO:0006424">
    <property type="term" value="P:glutamyl-tRNA aminoacylation"/>
    <property type="evidence" value="ECO:0000318"/>
    <property type="project" value="GO_Central"/>
</dbReference>
<dbReference type="GO" id="GO:0002097">
    <property type="term" value="P:tRNA wobble base modification"/>
    <property type="evidence" value="ECO:0000314"/>
    <property type="project" value="EcoCyc"/>
</dbReference>
<dbReference type="FunFam" id="3.40.50.620:FF:000093">
    <property type="entry name" value="Glutamyl-Q tRNA(Asp) synthetase"/>
    <property type="match status" value="1"/>
</dbReference>
<dbReference type="Gene3D" id="3.40.50.620">
    <property type="entry name" value="HUPs"/>
    <property type="match status" value="1"/>
</dbReference>
<dbReference type="HAMAP" id="MF_01428">
    <property type="entry name" value="Glu_Q_tRNA_synth"/>
    <property type="match status" value="1"/>
</dbReference>
<dbReference type="InterPro" id="IPR022380">
    <property type="entry name" value="Glu-Q_tRNA(Asp)_Synthase"/>
</dbReference>
<dbReference type="InterPro" id="IPR000924">
    <property type="entry name" value="Glu/Gln-tRNA-synth"/>
</dbReference>
<dbReference type="InterPro" id="IPR020058">
    <property type="entry name" value="Glu/Gln-tRNA-synth_Ib_cat-dom"/>
</dbReference>
<dbReference type="InterPro" id="IPR049940">
    <property type="entry name" value="GluQ/Sye"/>
</dbReference>
<dbReference type="InterPro" id="IPR014729">
    <property type="entry name" value="Rossmann-like_a/b/a_fold"/>
</dbReference>
<dbReference type="NCBIfam" id="NF004312">
    <property type="entry name" value="PRK05710.1-1"/>
    <property type="match status" value="1"/>
</dbReference>
<dbReference type="NCBIfam" id="NF004314">
    <property type="entry name" value="PRK05710.1-3"/>
    <property type="match status" value="1"/>
</dbReference>
<dbReference type="NCBIfam" id="TIGR03838">
    <property type="entry name" value="queuosine_YadB"/>
    <property type="match status" value="1"/>
</dbReference>
<dbReference type="PANTHER" id="PTHR43311">
    <property type="entry name" value="GLUTAMATE--TRNA LIGASE"/>
    <property type="match status" value="1"/>
</dbReference>
<dbReference type="PANTHER" id="PTHR43311:SF1">
    <property type="entry name" value="GLUTAMYL-Q TRNA(ASP) SYNTHETASE"/>
    <property type="match status" value="1"/>
</dbReference>
<dbReference type="Pfam" id="PF00749">
    <property type="entry name" value="tRNA-synt_1c"/>
    <property type="match status" value="1"/>
</dbReference>
<dbReference type="PRINTS" id="PR00987">
    <property type="entry name" value="TRNASYNTHGLU"/>
</dbReference>
<dbReference type="SUPFAM" id="SSF52374">
    <property type="entry name" value="Nucleotidylyl transferase"/>
    <property type="match status" value="1"/>
</dbReference>
<protein>
    <recommendedName>
        <fullName>Glutamyl-Q tRNA(Asp) synthetase</fullName>
        <shortName>Glu-Q-RSs</shortName>
        <ecNumber>6.1.1.-</ecNumber>
    </recommendedName>
</protein>
<comment type="function">
    <text evidence="2 3 4">Catalyzes the tRNA-independent activation of glutamate in presence of ATP and the subsequent transfer of glutamate onto tRNA(Asp). Glutamate is transferred on the 2-amino-5-(4,5-dihydroxy-2-cyclopenten-1-yl) moiety of the queuosine in position 34 of the tRNA(Asp), the wobble position of the QUC anticodon. Does not transfer glutamate to either tRNA(Glu) or tRNA(Gln). The incapacity of the glutamylated tRNA(Asp) to bind elongation factor Tu suggests that it is not involved in ribosomal protein biosynthesis.</text>
</comment>
<comment type="cofactor">
    <cofactor>
        <name>Zn(2+)</name>
        <dbReference type="ChEBI" id="CHEBI:29105"/>
    </cofactor>
    <text>Binds 1 zinc ion per subunit.</text>
</comment>
<comment type="biophysicochemical properties">
    <kinetics>
        <KM>0.15 uM for tRNA(Asp)</KM>
        <KM>3000 uM for glutamate</KM>
    </kinetics>
</comment>
<comment type="similarity">
    <text evidence="6">Belongs to the class-I aminoacyl-tRNA synthetase family. GluQ subfamily.</text>
</comment>
<comment type="sequence caution" evidence="6">
    <conflict type="frameshift">
        <sequence resource="EMBL-CDS" id="AAA23686"/>
    </conflict>
</comment>
<name>GLUQ_ECOLI</name>
<feature type="chain" id="PRO_0000208300" description="Glutamyl-Q tRNA(Asp) synthetase">
    <location>
        <begin position="1"/>
        <end position="308"/>
    </location>
</feature>
<feature type="short sequence motif" description="'HIGH' region">
    <location>
        <begin position="22"/>
        <end position="32"/>
    </location>
</feature>
<feature type="short sequence motif" description="'KMSKS' region">
    <location>
        <begin position="238"/>
        <end position="242"/>
    </location>
</feature>
<feature type="binding site">
    <location>
        <begin position="19"/>
        <end position="23"/>
    </location>
    <ligand>
        <name>L-glutamate</name>
        <dbReference type="ChEBI" id="CHEBI:29985"/>
    </ligand>
</feature>
<feature type="binding site" evidence="5">
    <location>
        <position position="55"/>
    </location>
    <ligand>
        <name>L-glutamate</name>
        <dbReference type="ChEBI" id="CHEBI:29985"/>
    </ligand>
</feature>
<feature type="binding site">
    <location>
        <position position="111"/>
    </location>
    <ligand>
        <name>Zn(2+)</name>
        <dbReference type="ChEBI" id="CHEBI:29105"/>
    </ligand>
</feature>
<feature type="binding site">
    <location>
        <position position="113"/>
    </location>
    <ligand>
        <name>Zn(2+)</name>
        <dbReference type="ChEBI" id="CHEBI:29105"/>
    </ligand>
</feature>
<feature type="binding site">
    <location>
        <position position="125"/>
    </location>
    <ligand>
        <name>Zn(2+)</name>
        <dbReference type="ChEBI" id="CHEBI:29105"/>
    </ligand>
</feature>
<feature type="binding site">
    <location>
        <position position="129"/>
    </location>
    <ligand>
        <name>Zn(2+)</name>
        <dbReference type="ChEBI" id="CHEBI:29105"/>
    </ligand>
</feature>
<feature type="binding site" evidence="5">
    <location>
        <position position="182"/>
    </location>
    <ligand>
        <name>L-glutamate</name>
        <dbReference type="ChEBI" id="CHEBI:29985"/>
    </ligand>
</feature>
<feature type="binding site" evidence="5">
    <location>
        <position position="200"/>
    </location>
    <ligand>
        <name>L-glutamate</name>
        <dbReference type="ChEBI" id="CHEBI:29985"/>
    </ligand>
</feature>
<feature type="binding site" evidence="1">
    <location>
        <position position="241"/>
    </location>
    <ligand>
        <name>ATP</name>
        <dbReference type="ChEBI" id="CHEBI:30616"/>
    </ligand>
</feature>
<feature type="strand" evidence="7">
    <location>
        <begin position="17"/>
        <end position="20"/>
    </location>
</feature>
<feature type="helix" evidence="7">
    <location>
        <begin position="30"/>
        <end position="45"/>
    </location>
</feature>
<feature type="strand" evidence="7">
    <location>
        <begin position="49"/>
        <end position="54"/>
    </location>
</feature>
<feature type="helix" evidence="7">
    <location>
        <begin position="59"/>
        <end position="61"/>
    </location>
</feature>
<feature type="helix" evidence="7">
    <location>
        <begin position="66"/>
        <end position="76"/>
    </location>
</feature>
<feature type="helix" evidence="7">
    <location>
        <begin position="88"/>
        <end position="90"/>
    </location>
</feature>
<feature type="helix" evidence="7">
    <location>
        <begin position="92"/>
        <end position="104"/>
    </location>
</feature>
<feature type="strand" evidence="7">
    <location>
        <begin position="108"/>
        <end position="111"/>
    </location>
</feature>
<feature type="helix" evidence="7">
    <location>
        <begin position="115"/>
        <end position="120"/>
    </location>
</feature>
<feature type="turn" evidence="7">
    <location>
        <begin position="128"/>
        <end position="132"/>
    </location>
</feature>
<feature type="strand" evidence="7">
    <location>
        <begin position="140"/>
        <end position="143"/>
    </location>
</feature>
<feature type="strand" evidence="7">
    <location>
        <begin position="151"/>
        <end position="154"/>
    </location>
</feature>
<feature type="turn" evidence="7">
    <location>
        <begin position="155"/>
        <end position="157"/>
    </location>
</feature>
<feature type="strand" evidence="7">
    <location>
        <begin position="158"/>
        <end position="161"/>
    </location>
</feature>
<feature type="helix" evidence="7">
    <location>
        <begin position="164"/>
        <end position="168"/>
    </location>
</feature>
<feature type="strand" evidence="7">
    <location>
        <begin position="172"/>
        <end position="174"/>
    </location>
</feature>
<feature type="helix" evidence="7">
    <location>
        <begin position="182"/>
        <end position="192"/>
    </location>
</feature>
<feature type="strand" evidence="7">
    <location>
        <begin position="197"/>
        <end position="201"/>
    </location>
</feature>
<feature type="helix" evidence="7">
    <location>
        <begin position="202"/>
        <end position="204"/>
    </location>
</feature>
<feature type="turn" evidence="7">
    <location>
        <begin position="205"/>
        <end position="207"/>
    </location>
</feature>
<feature type="helix" evidence="7">
    <location>
        <begin position="208"/>
        <end position="218"/>
    </location>
</feature>
<feature type="strand" evidence="7">
    <location>
        <begin position="224"/>
        <end position="228"/>
    </location>
</feature>
<feature type="strand" evidence="8">
    <location>
        <begin position="230"/>
        <end position="232"/>
    </location>
</feature>
<feature type="strand" evidence="8">
    <location>
        <begin position="236"/>
        <end position="240"/>
    </location>
</feature>
<feature type="helix" evidence="7">
    <location>
        <begin position="254"/>
        <end position="263"/>
    </location>
</feature>
<feature type="helix" evidence="7">
    <location>
        <begin position="272"/>
        <end position="274"/>
    </location>
</feature>
<feature type="helix" evidence="7">
    <location>
        <begin position="277"/>
        <end position="286"/>
    </location>
</feature>
<feature type="helix" evidence="7">
    <location>
        <begin position="290"/>
        <end position="292"/>
    </location>
</feature>
<feature type="strand" evidence="7">
    <location>
        <begin position="297"/>
        <end position="299"/>
    </location>
</feature>
<feature type="helix" evidence="8">
    <location>
        <begin position="301"/>
        <end position="303"/>
    </location>
</feature>
<evidence type="ECO:0000250" key="1"/>
<evidence type="ECO:0000269" key="2">
    <source>
    </source>
</evidence>
<evidence type="ECO:0000269" key="3">
    <source>
    </source>
</evidence>
<evidence type="ECO:0000269" key="4">
    <source>
    </source>
</evidence>
<evidence type="ECO:0000269" key="5">
    <source>
    </source>
</evidence>
<evidence type="ECO:0000305" key="6"/>
<evidence type="ECO:0007829" key="7">
    <source>
        <dbReference type="PDB" id="1NZJ"/>
    </source>
</evidence>
<evidence type="ECO:0007829" key="8">
    <source>
        <dbReference type="PDB" id="4A91"/>
    </source>
</evidence>
<sequence length="308" mass="34868">MLPPYFLFKEMTDTQYIGRFAPSPSGELHFGSLIAALGSYLQARARQGRWLVRIEDIDPPREVPGAAETILRQLEHYGLHWDGDVLWQSQRHDAYREALAWLHEQGLSYYCTCTRARIQSIGGIYDGHCRVLHHGPDNAAVRIRQQHPVTQFTDQLRGIIHADEKLAREDFIIHRRDGLFAYNLAVVVDDHFQGVTEIVRGADLIEPTVRQISLYQLFGWKVPDYIHLPLALNPQGAKLSKQNHAPALPKGDPRPVLIAALQFLGQQAEAHWQDFSVEQILQSAVKNWRLTAVPESAIVNSTFSNASC</sequence>
<keyword id="KW-0002">3D-structure</keyword>
<keyword id="KW-0030">Aminoacyl-tRNA synthetase</keyword>
<keyword id="KW-0067">ATP-binding</keyword>
<keyword id="KW-0436">Ligase</keyword>
<keyword id="KW-0479">Metal-binding</keyword>
<keyword id="KW-0547">Nucleotide-binding</keyword>
<keyword id="KW-1185">Reference proteome</keyword>
<keyword id="KW-0862">Zinc</keyword>